<protein>
    <recommendedName>
        <fullName evidence="1">Small ribosomal subunit protein bS20</fullName>
    </recommendedName>
    <alternativeName>
        <fullName evidence="3">30S ribosomal protein S20</fullName>
    </alternativeName>
</protein>
<keyword id="KW-1185">Reference proteome</keyword>
<keyword id="KW-0687">Ribonucleoprotein</keyword>
<keyword id="KW-0689">Ribosomal protein</keyword>
<keyword id="KW-0694">RNA-binding</keyword>
<keyword id="KW-0699">rRNA-binding</keyword>
<reference key="1">
    <citation type="journal article" date="2003" name="Genome Res.">
        <title>Comparative complete genome sequence analysis of the amino acid replacements responsible for the thermostability of Corynebacterium efficiens.</title>
        <authorList>
            <person name="Nishio Y."/>
            <person name="Nakamura Y."/>
            <person name="Kawarabayasi Y."/>
            <person name="Usuda Y."/>
            <person name="Kimura E."/>
            <person name="Sugimoto S."/>
            <person name="Matsui K."/>
            <person name="Yamagishi A."/>
            <person name="Kikuchi H."/>
            <person name="Ikeo K."/>
            <person name="Gojobori T."/>
        </authorList>
    </citation>
    <scope>NUCLEOTIDE SEQUENCE [LARGE SCALE GENOMIC DNA]</scope>
    <source>
        <strain>DSM 44549 / YS-314 / AJ 12310 / JCM 11189 / NBRC 100395</strain>
    </source>
</reference>
<sequence length="87" mass="9586">MANIKSQIKRNKTNEKARLRNQAIRSAVRTEIRKFHAAIDGGDKAAAESQLRVASRALDKAVTKGVFHRNNAANKKSSLARAFNKLG</sequence>
<dbReference type="EMBL" id="BA000035">
    <property type="protein sequence ID" value="BAC19054.1"/>
    <property type="molecule type" value="Genomic_DNA"/>
</dbReference>
<dbReference type="RefSeq" id="WP_006768251.1">
    <property type="nucleotide sequence ID" value="NC_004369.1"/>
</dbReference>
<dbReference type="SMR" id="Q8FNA1"/>
<dbReference type="STRING" id="196164.gene:10742675"/>
<dbReference type="KEGG" id="cef:CE2244"/>
<dbReference type="eggNOG" id="COG0268">
    <property type="taxonomic scope" value="Bacteria"/>
</dbReference>
<dbReference type="HOGENOM" id="CLU_160655_0_1_11"/>
<dbReference type="OrthoDB" id="9807974at2"/>
<dbReference type="Proteomes" id="UP000001409">
    <property type="component" value="Chromosome"/>
</dbReference>
<dbReference type="GO" id="GO:0005829">
    <property type="term" value="C:cytosol"/>
    <property type="evidence" value="ECO:0007669"/>
    <property type="project" value="TreeGrafter"/>
</dbReference>
<dbReference type="GO" id="GO:0015935">
    <property type="term" value="C:small ribosomal subunit"/>
    <property type="evidence" value="ECO:0007669"/>
    <property type="project" value="TreeGrafter"/>
</dbReference>
<dbReference type="GO" id="GO:0070181">
    <property type="term" value="F:small ribosomal subunit rRNA binding"/>
    <property type="evidence" value="ECO:0007669"/>
    <property type="project" value="TreeGrafter"/>
</dbReference>
<dbReference type="GO" id="GO:0003735">
    <property type="term" value="F:structural constituent of ribosome"/>
    <property type="evidence" value="ECO:0007669"/>
    <property type="project" value="InterPro"/>
</dbReference>
<dbReference type="GO" id="GO:0006412">
    <property type="term" value="P:translation"/>
    <property type="evidence" value="ECO:0007669"/>
    <property type="project" value="UniProtKB-UniRule"/>
</dbReference>
<dbReference type="FunFam" id="1.20.58.110:FF:000001">
    <property type="entry name" value="30S ribosomal protein S20"/>
    <property type="match status" value="1"/>
</dbReference>
<dbReference type="Gene3D" id="1.20.58.110">
    <property type="entry name" value="Ribosomal protein S20"/>
    <property type="match status" value="1"/>
</dbReference>
<dbReference type="HAMAP" id="MF_00500">
    <property type="entry name" value="Ribosomal_bS20"/>
    <property type="match status" value="1"/>
</dbReference>
<dbReference type="InterPro" id="IPR002583">
    <property type="entry name" value="Ribosomal_bS20"/>
</dbReference>
<dbReference type="InterPro" id="IPR036510">
    <property type="entry name" value="Ribosomal_bS20_sf"/>
</dbReference>
<dbReference type="NCBIfam" id="TIGR00029">
    <property type="entry name" value="S20"/>
    <property type="match status" value="1"/>
</dbReference>
<dbReference type="PANTHER" id="PTHR33398">
    <property type="entry name" value="30S RIBOSOMAL PROTEIN S20"/>
    <property type="match status" value="1"/>
</dbReference>
<dbReference type="PANTHER" id="PTHR33398:SF1">
    <property type="entry name" value="SMALL RIBOSOMAL SUBUNIT PROTEIN BS20C"/>
    <property type="match status" value="1"/>
</dbReference>
<dbReference type="Pfam" id="PF01649">
    <property type="entry name" value="Ribosomal_S20p"/>
    <property type="match status" value="1"/>
</dbReference>
<dbReference type="SUPFAM" id="SSF46992">
    <property type="entry name" value="Ribosomal protein S20"/>
    <property type="match status" value="1"/>
</dbReference>
<name>RS20_COREF</name>
<evidence type="ECO:0000255" key="1">
    <source>
        <dbReference type="HAMAP-Rule" id="MF_00500"/>
    </source>
</evidence>
<evidence type="ECO:0000256" key="2">
    <source>
        <dbReference type="SAM" id="MobiDB-lite"/>
    </source>
</evidence>
<evidence type="ECO:0000305" key="3"/>
<proteinExistence type="inferred from homology"/>
<comment type="function">
    <text evidence="1">Binds directly to 16S ribosomal RNA.</text>
</comment>
<comment type="similarity">
    <text evidence="1">Belongs to the bacterial ribosomal protein bS20 family.</text>
</comment>
<organism>
    <name type="scientific">Corynebacterium efficiens (strain DSM 44549 / YS-314 / AJ 12310 / JCM 11189 / NBRC 100395)</name>
    <dbReference type="NCBI Taxonomy" id="196164"/>
    <lineage>
        <taxon>Bacteria</taxon>
        <taxon>Bacillati</taxon>
        <taxon>Actinomycetota</taxon>
        <taxon>Actinomycetes</taxon>
        <taxon>Mycobacteriales</taxon>
        <taxon>Corynebacteriaceae</taxon>
        <taxon>Corynebacterium</taxon>
    </lineage>
</organism>
<gene>
    <name evidence="1" type="primary">rpsT</name>
    <name type="ordered locus">CE2244</name>
</gene>
<feature type="chain" id="PRO_0000167952" description="Small ribosomal subunit protein bS20">
    <location>
        <begin position="1"/>
        <end position="87"/>
    </location>
</feature>
<feature type="region of interest" description="Disordered" evidence="2">
    <location>
        <begin position="1"/>
        <end position="20"/>
    </location>
</feature>
<accession>Q8FNA1</accession>